<evidence type="ECO:0000255" key="1">
    <source>
        <dbReference type="HAMAP-Rule" id="MF_01248"/>
    </source>
</evidence>
<evidence type="ECO:0000256" key="2">
    <source>
        <dbReference type="SAM" id="MobiDB-lite"/>
    </source>
</evidence>
<accession>B7N1M3</accession>
<reference key="1">
    <citation type="journal article" date="2009" name="PLoS Genet.">
        <title>Organised genome dynamics in the Escherichia coli species results in highly diverse adaptive paths.</title>
        <authorList>
            <person name="Touchon M."/>
            <person name="Hoede C."/>
            <person name="Tenaillon O."/>
            <person name="Barbe V."/>
            <person name="Baeriswyl S."/>
            <person name="Bidet P."/>
            <person name="Bingen E."/>
            <person name="Bonacorsi S."/>
            <person name="Bouchier C."/>
            <person name="Bouvet O."/>
            <person name="Calteau A."/>
            <person name="Chiapello H."/>
            <person name="Clermont O."/>
            <person name="Cruveiller S."/>
            <person name="Danchin A."/>
            <person name="Diard M."/>
            <person name="Dossat C."/>
            <person name="Karoui M.E."/>
            <person name="Frapy E."/>
            <person name="Garry L."/>
            <person name="Ghigo J.M."/>
            <person name="Gilles A.M."/>
            <person name="Johnson J."/>
            <person name="Le Bouguenec C."/>
            <person name="Lescat M."/>
            <person name="Mangenot S."/>
            <person name="Martinez-Jehanne V."/>
            <person name="Matic I."/>
            <person name="Nassif X."/>
            <person name="Oztas S."/>
            <person name="Petit M.A."/>
            <person name="Pichon C."/>
            <person name="Rouy Z."/>
            <person name="Ruf C.S."/>
            <person name="Schneider D."/>
            <person name="Tourret J."/>
            <person name="Vacherie B."/>
            <person name="Vallenet D."/>
            <person name="Medigue C."/>
            <person name="Rocha E.P.C."/>
            <person name="Denamur E."/>
        </authorList>
    </citation>
    <scope>NUCLEOTIDE SEQUENCE [LARGE SCALE GENOMIC DNA]</scope>
    <source>
        <strain>ED1a</strain>
    </source>
</reference>
<proteinExistence type="inferred from homology"/>
<keyword id="KW-0119">Carbohydrate metabolism</keyword>
<keyword id="KW-0321">Glycogen metabolism</keyword>
<keyword id="KW-0326">Glycosidase</keyword>
<keyword id="KW-0378">Hydrolase</keyword>
<feature type="chain" id="PRO_1000165056" description="Glycogen debranching enzyme">
    <location>
        <begin position="1"/>
        <end position="657"/>
    </location>
</feature>
<feature type="region of interest" description="Disordered" evidence="2">
    <location>
        <begin position="460"/>
        <end position="479"/>
    </location>
</feature>
<feature type="active site" description="Nucleophile" evidence="1">
    <location>
        <position position="336"/>
    </location>
</feature>
<feature type="active site" description="Proton donor" evidence="1">
    <location>
        <position position="371"/>
    </location>
</feature>
<feature type="site" description="Transition state stabilizer" evidence="1">
    <location>
        <position position="443"/>
    </location>
</feature>
<sequence length="657" mass="73709">MTQLAIGKPTPLGAHYDGQGVNFTLFSAHAERVELCVFDANGQEHRYDLPGHSGDIWHGYLPDARPGLRYGYRVHGPWQPAEGHRFNPAKLLIDPCARQIDGEFKDNPLLHAGHNEPDYRDNAAIVPKCVVVVDHYDWEDDAPPRTPWGSTIIYEAHVKGLTYLHPEIPVEIRGTYKALGHPVMINYLKQLGITALELLPVAQFASEPRLQRMGLSNYWGYNPVAMFALHPAYACSPETALDEFRDAIKALHKAGIEVILDIVLNHSAELDLDGPLFSLRGIDNRSYYWIREDGDYHNWTGCGNTLNLSHPAVVDYASACLRYWVETCHVDGFRFDLAAVMGRTPEFRQDAPLFTAIQNCPVLSQVKLIAEPWDIAPGGYQVGNFPPLFAEWNDHFRDAARRFWLHYDLPLGVFAGRFAASSDVFKRNGRLPSAAINLVTAHDGFTLRDCVCFNHKHNEANGEENRDGTNNNYSNNHGKEGLGGTLDLVERRRDSIHALLTTLLLSQGTPMLLAGDEHGHSQHGNNNAYCQDNQLTWLDWSQASSGLTAFTAALIHLRKRIPALMENRWWEEGDGNVRWLNRYAQPLSTDEWQNGPKQLQILLSDRFLIAINATLEVTEIVLPAGEWHAIPPFAGEDNPVITAVWQGPAHGLCVFQR</sequence>
<dbReference type="EC" id="3.2.1.196" evidence="1"/>
<dbReference type="EMBL" id="CU928162">
    <property type="protein sequence ID" value="CAR10243.2"/>
    <property type="molecule type" value="Genomic_DNA"/>
</dbReference>
<dbReference type="RefSeq" id="WP_000192571.1">
    <property type="nucleotide sequence ID" value="NC_011745.1"/>
</dbReference>
<dbReference type="SMR" id="B7N1M3"/>
<dbReference type="CAZy" id="CBM48">
    <property type="family name" value="Carbohydrate-Binding Module Family 48"/>
</dbReference>
<dbReference type="CAZy" id="GH13">
    <property type="family name" value="Glycoside Hydrolase Family 13"/>
</dbReference>
<dbReference type="KEGG" id="ecq:ECED1_4106"/>
<dbReference type="HOGENOM" id="CLU_011725_1_1_6"/>
<dbReference type="UniPathway" id="UPA00165"/>
<dbReference type="Proteomes" id="UP000000748">
    <property type="component" value="Chromosome"/>
</dbReference>
<dbReference type="GO" id="GO:0004133">
    <property type="term" value="F:glycogen debranching enzyme activity"/>
    <property type="evidence" value="ECO:0007669"/>
    <property type="project" value="UniProtKB-UniRule"/>
</dbReference>
<dbReference type="GO" id="GO:0004553">
    <property type="term" value="F:hydrolase activity, hydrolyzing O-glycosyl compounds"/>
    <property type="evidence" value="ECO:0007669"/>
    <property type="project" value="InterPro"/>
</dbReference>
<dbReference type="GO" id="GO:0005980">
    <property type="term" value="P:glycogen catabolic process"/>
    <property type="evidence" value="ECO:0007669"/>
    <property type="project" value="UniProtKB-UniRule"/>
</dbReference>
<dbReference type="CDD" id="cd11326">
    <property type="entry name" value="AmyAc_Glg_debranch"/>
    <property type="match status" value="1"/>
</dbReference>
<dbReference type="CDD" id="cd02856">
    <property type="entry name" value="E_set_GDE_Isoamylase_N"/>
    <property type="match status" value="1"/>
</dbReference>
<dbReference type="FunFam" id="2.60.40.10:FF:000468">
    <property type="entry name" value="Glycogen debranching enzyme"/>
    <property type="match status" value="1"/>
</dbReference>
<dbReference type="FunFam" id="3.20.20.80:FF:000031">
    <property type="entry name" value="Glycogen debranching enzyme"/>
    <property type="match status" value="1"/>
</dbReference>
<dbReference type="Gene3D" id="3.20.20.80">
    <property type="entry name" value="Glycosidases"/>
    <property type="match status" value="1"/>
</dbReference>
<dbReference type="Gene3D" id="2.60.40.1180">
    <property type="entry name" value="Golgi alpha-mannosidase II"/>
    <property type="match status" value="1"/>
</dbReference>
<dbReference type="Gene3D" id="2.60.40.10">
    <property type="entry name" value="Immunoglobulins"/>
    <property type="match status" value="1"/>
</dbReference>
<dbReference type="HAMAP" id="MF_01248">
    <property type="entry name" value="GlgX"/>
    <property type="match status" value="1"/>
</dbReference>
<dbReference type="InterPro" id="IPR040784">
    <property type="entry name" value="GlgX_C"/>
</dbReference>
<dbReference type="InterPro" id="IPR044505">
    <property type="entry name" value="GlgX_Isoamylase_N_E_set"/>
</dbReference>
<dbReference type="InterPro" id="IPR006047">
    <property type="entry name" value="Glyco_hydro_13_cat_dom"/>
</dbReference>
<dbReference type="InterPro" id="IPR004193">
    <property type="entry name" value="Glyco_hydro_13_N"/>
</dbReference>
<dbReference type="InterPro" id="IPR013780">
    <property type="entry name" value="Glyco_hydro_b"/>
</dbReference>
<dbReference type="InterPro" id="IPR022844">
    <property type="entry name" value="Glycogen_debranch_bac"/>
</dbReference>
<dbReference type="InterPro" id="IPR011837">
    <property type="entry name" value="Glycogen_debranch_GlgX"/>
</dbReference>
<dbReference type="InterPro" id="IPR017853">
    <property type="entry name" value="Glycoside_hydrolase_SF"/>
</dbReference>
<dbReference type="InterPro" id="IPR013783">
    <property type="entry name" value="Ig-like_fold"/>
</dbReference>
<dbReference type="InterPro" id="IPR014756">
    <property type="entry name" value="Ig_E-set"/>
</dbReference>
<dbReference type="NCBIfam" id="TIGR02100">
    <property type="entry name" value="glgX_debranch"/>
    <property type="match status" value="1"/>
</dbReference>
<dbReference type="NCBIfam" id="NF002983">
    <property type="entry name" value="PRK03705.1"/>
    <property type="match status" value="1"/>
</dbReference>
<dbReference type="PANTHER" id="PTHR43002">
    <property type="entry name" value="GLYCOGEN DEBRANCHING ENZYME"/>
    <property type="match status" value="1"/>
</dbReference>
<dbReference type="Pfam" id="PF00128">
    <property type="entry name" value="Alpha-amylase"/>
    <property type="match status" value="1"/>
</dbReference>
<dbReference type="Pfam" id="PF02922">
    <property type="entry name" value="CBM_48"/>
    <property type="match status" value="1"/>
</dbReference>
<dbReference type="Pfam" id="PF18390">
    <property type="entry name" value="GlgX_C"/>
    <property type="match status" value="1"/>
</dbReference>
<dbReference type="SMART" id="SM00642">
    <property type="entry name" value="Aamy"/>
    <property type="match status" value="1"/>
</dbReference>
<dbReference type="SUPFAM" id="SSF51445">
    <property type="entry name" value="(Trans)glycosidases"/>
    <property type="match status" value="1"/>
</dbReference>
<dbReference type="SUPFAM" id="SSF81296">
    <property type="entry name" value="E set domains"/>
    <property type="match status" value="1"/>
</dbReference>
<protein>
    <recommendedName>
        <fullName evidence="1">Glycogen debranching enzyme</fullName>
        <ecNumber evidence="1">3.2.1.196</ecNumber>
    </recommendedName>
    <alternativeName>
        <fullName evidence="1">Limit dextrin alpha-1,6-maltotetraose-hydrolase</fullName>
    </alternativeName>
</protein>
<organism>
    <name type="scientific">Escherichia coli O81 (strain ED1a)</name>
    <dbReference type="NCBI Taxonomy" id="585397"/>
    <lineage>
        <taxon>Bacteria</taxon>
        <taxon>Pseudomonadati</taxon>
        <taxon>Pseudomonadota</taxon>
        <taxon>Gammaproteobacteria</taxon>
        <taxon>Enterobacterales</taxon>
        <taxon>Enterobacteriaceae</taxon>
        <taxon>Escherichia</taxon>
    </lineage>
</organism>
<gene>
    <name evidence="1" type="primary">glgX</name>
    <name type="ordered locus">ECED1_4106</name>
</gene>
<name>GLGX_ECO81</name>
<comment type="function">
    <text evidence="1">Removes maltotriose and maltotetraose chains that are attached by 1,6-alpha-linkage to the limit dextrin main chain, generating a debranched limit dextrin.</text>
</comment>
<comment type="catalytic activity">
    <reaction evidence="1">
        <text>Hydrolysis of (1-&gt;6)-alpha-D-glucosidic linkages to branches with degrees of polymerization of three or four glucose residues in limit dextrin.</text>
        <dbReference type="EC" id="3.2.1.196"/>
    </reaction>
</comment>
<comment type="pathway">
    <text evidence="1">Glycan degradation; glycogen degradation.</text>
</comment>
<comment type="similarity">
    <text evidence="1">Belongs to the glycosyl hydrolase 13 family.</text>
</comment>